<proteinExistence type="evidence at protein level"/>
<organism>
    <name type="scientific">Drosophila melanogaster</name>
    <name type="common">Fruit fly</name>
    <dbReference type="NCBI Taxonomy" id="7227"/>
    <lineage>
        <taxon>Eukaryota</taxon>
        <taxon>Metazoa</taxon>
        <taxon>Ecdysozoa</taxon>
        <taxon>Arthropoda</taxon>
        <taxon>Hexapoda</taxon>
        <taxon>Insecta</taxon>
        <taxon>Pterygota</taxon>
        <taxon>Neoptera</taxon>
        <taxon>Endopterygota</taxon>
        <taxon>Diptera</taxon>
        <taxon>Brachycera</taxon>
        <taxon>Muscomorpha</taxon>
        <taxon>Ephydroidea</taxon>
        <taxon>Drosophilidae</taxon>
        <taxon>Drosophila</taxon>
        <taxon>Sophophora</taxon>
    </lineage>
</organism>
<keyword id="KW-0002">3D-structure</keyword>
<keyword id="KW-0217">Developmental protein</keyword>
<keyword id="KW-0238">DNA-binding</keyword>
<keyword id="KW-0371">Homeobox</keyword>
<keyword id="KW-0539">Nucleus</keyword>
<keyword id="KW-1185">Reference proteome</keyword>
<keyword id="KW-0804">Transcription</keyword>
<keyword id="KW-0805">Transcription regulation</keyword>
<dbReference type="EMBL" id="X68347">
    <property type="protein sequence ID" value="CAA48416.1"/>
    <property type="molecule type" value="mRNA"/>
</dbReference>
<dbReference type="EMBL" id="AE001572">
    <property type="protein sequence ID" value="AAD19800.1"/>
    <property type="molecule type" value="Genomic_DNA"/>
</dbReference>
<dbReference type="EMBL" id="AE014297">
    <property type="protein sequence ID" value="AAF54087.1"/>
    <property type="molecule type" value="Genomic_DNA"/>
</dbReference>
<dbReference type="EMBL" id="BT028847">
    <property type="protein sequence ID" value="ABI34228.1"/>
    <property type="molecule type" value="mRNA"/>
</dbReference>
<dbReference type="PIR" id="A43697">
    <property type="entry name" value="A43697"/>
</dbReference>
<dbReference type="RefSeq" id="NP_476793.1">
    <property type="nucleotide sequence ID" value="NM_057445.3"/>
</dbReference>
<dbReference type="PDB" id="1KZ2">
    <property type="method" value="NMR"/>
    <property type="chains" value="A=132-147"/>
</dbReference>
<dbReference type="PDBsum" id="1KZ2"/>
<dbReference type="SMR" id="P09089"/>
<dbReference type="BioGRID" id="66026">
    <property type="interactions" value="19"/>
</dbReference>
<dbReference type="DIP" id="DIP-18255N"/>
<dbReference type="FunCoup" id="P09089">
    <property type="interactions" value="4"/>
</dbReference>
<dbReference type="IntAct" id="P09089">
    <property type="interactions" value="7"/>
</dbReference>
<dbReference type="STRING" id="7227.FBpp0081170"/>
<dbReference type="PaxDb" id="7227-FBpp0081170"/>
<dbReference type="DNASU" id="40828"/>
<dbReference type="EnsemblMetazoa" id="FBtr0081670">
    <property type="protein sequence ID" value="FBpp0081170"/>
    <property type="gene ID" value="FBgn0004053"/>
</dbReference>
<dbReference type="GeneID" id="40828"/>
<dbReference type="KEGG" id="dme:Dmel_CG1046"/>
<dbReference type="AGR" id="FB:FBgn0004053"/>
<dbReference type="CTD" id="40828"/>
<dbReference type="FlyBase" id="FBgn0004053">
    <property type="gene designation" value="zen"/>
</dbReference>
<dbReference type="VEuPathDB" id="VectorBase:FBgn0004053"/>
<dbReference type="eggNOG" id="KOG0489">
    <property type="taxonomic scope" value="Eukaryota"/>
</dbReference>
<dbReference type="GeneTree" id="ENSGT00940000156043"/>
<dbReference type="HOGENOM" id="CLU_817043_0_0_1"/>
<dbReference type="InParanoid" id="P09089"/>
<dbReference type="OMA" id="YYPVHQP"/>
<dbReference type="OrthoDB" id="6159439at2759"/>
<dbReference type="PhylomeDB" id="P09089"/>
<dbReference type="SignaLink" id="P09089"/>
<dbReference type="BioGRID-ORCS" id="40828">
    <property type="hits" value="0 hits in 1 CRISPR screen"/>
</dbReference>
<dbReference type="EvolutionaryTrace" id="P09089"/>
<dbReference type="GenomeRNAi" id="40828"/>
<dbReference type="PRO" id="PR:P09089"/>
<dbReference type="Proteomes" id="UP000000803">
    <property type="component" value="Chromosome 3R"/>
</dbReference>
<dbReference type="Bgee" id="FBgn0004053">
    <property type="expression patterns" value="Expressed in anlage in statu nascendi and 20 other cell types or tissues"/>
</dbReference>
<dbReference type="GO" id="GO:0005634">
    <property type="term" value="C:nucleus"/>
    <property type="evidence" value="ECO:0000318"/>
    <property type="project" value="GO_Central"/>
</dbReference>
<dbReference type="GO" id="GO:0000981">
    <property type="term" value="F:DNA-binding transcription factor activity, RNA polymerase II-specific"/>
    <property type="evidence" value="ECO:0000314"/>
    <property type="project" value="FlyBase"/>
</dbReference>
<dbReference type="GO" id="GO:0000978">
    <property type="term" value="F:RNA polymerase II cis-regulatory region sequence-specific DNA binding"/>
    <property type="evidence" value="ECO:0000318"/>
    <property type="project" value="GO_Central"/>
</dbReference>
<dbReference type="GO" id="GO:0043565">
    <property type="term" value="F:sequence-specific DNA binding"/>
    <property type="evidence" value="ECO:0000314"/>
    <property type="project" value="FlyBase"/>
</dbReference>
<dbReference type="GO" id="GO:0007378">
    <property type="term" value="P:amnioserosa formation"/>
    <property type="evidence" value="ECO:0000304"/>
    <property type="project" value="FlyBase"/>
</dbReference>
<dbReference type="GO" id="GO:0048749">
    <property type="term" value="P:compound eye development"/>
    <property type="evidence" value="ECO:0000315"/>
    <property type="project" value="FlyBase"/>
</dbReference>
<dbReference type="GO" id="GO:0045944">
    <property type="term" value="P:positive regulation of transcription by RNA polymerase II"/>
    <property type="evidence" value="ECO:0000314"/>
    <property type="project" value="FlyBase"/>
</dbReference>
<dbReference type="GO" id="GO:0006357">
    <property type="term" value="P:regulation of transcription by RNA polymerase II"/>
    <property type="evidence" value="ECO:0000318"/>
    <property type="project" value="GO_Central"/>
</dbReference>
<dbReference type="CDD" id="cd00086">
    <property type="entry name" value="homeodomain"/>
    <property type="match status" value="1"/>
</dbReference>
<dbReference type="FunFam" id="1.10.10.60:FF:000709">
    <property type="entry name" value="GG10235"/>
    <property type="match status" value="1"/>
</dbReference>
<dbReference type="Gene3D" id="1.10.10.60">
    <property type="entry name" value="Homeodomain-like"/>
    <property type="match status" value="1"/>
</dbReference>
<dbReference type="InterPro" id="IPR001356">
    <property type="entry name" value="HD"/>
</dbReference>
<dbReference type="InterPro" id="IPR020479">
    <property type="entry name" value="HD_metazoa"/>
</dbReference>
<dbReference type="InterPro" id="IPR017970">
    <property type="entry name" value="Homeobox_CS"/>
</dbReference>
<dbReference type="InterPro" id="IPR009057">
    <property type="entry name" value="Homeodomain-like_sf"/>
</dbReference>
<dbReference type="PANTHER" id="PTHR45664:SF12">
    <property type="entry name" value="PANCREAS_DUODENUM HOMEOBOX PROTEIN 1"/>
    <property type="match status" value="1"/>
</dbReference>
<dbReference type="PANTHER" id="PTHR45664">
    <property type="entry name" value="PROTEIN ZERKNUELLT 1-RELATED"/>
    <property type="match status" value="1"/>
</dbReference>
<dbReference type="Pfam" id="PF00046">
    <property type="entry name" value="Homeodomain"/>
    <property type="match status" value="1"/>
</dbReference>
<dbReference type="PRINTS" id="PR00024">
    <property type="entry name" value="HOMEOBOX"/>
</dbReference>
<dbReference type="SMART" id="SM00389">
    <property type="entry name" value="HOX"/>
    <property type="match status" value="1"/>
</dbReference>
<dbReference type="SUPFAM" id="SSF46689">
    <property type="entry name" value="Homeodomain-like"/>
    <property type="match status" value="1"/>
</dbReference>
<dbReference type="PROSITE" id="PS00027">
    <property type="entry name" value="HOMEOBOX_1"/>
    <property type="match status" value="1"/>
</dbReference>
<dbReference type="PROSITE" id="PS50071">
    <property type="entry name" value="HOMEOBOX_2"/>
    <property type="match status" value="1"/>
</dbReference>
<accession>P09089</accession>
<accession>Q0IGS3</accession>
<accession>Q9VI45</accession>
<reference key="1">
    <citation type="journal article" date="1987" name="Genes Dev.">
        <title>Molecular characterization of the zerknullt region of the Antennapedia gene complex in Drosophila.</title>
        <authorList>
            <person name="Rushlow C."/>
            <person name="Doyle H."/>
            <person name="Hoey T."/>
            <person name="Levine M."/>
        </authorList>
    </citation>
    <scope>NUCLEOTIDE SEQUENCE [MRNA]</scope>
    <scope>FUNCTION</scope>
    <scope>SUBCELLULAR LOCATION</scope>
</reference>
<reference key="2">
    <citation type="submission" date="1999-01" db="EMBL/GenBank/DDBJ databases">
        <title>Complete sequence of the Antennapedia complex of Drosophila.</title>
        <authorList>
            <person name="Celniker S.E."/>
            <person name="Pfeiffer B."/>
            <person name="Knafels J."/>
            <person name="Martin C.H."/>
            <person name="Mayeda C.A."/>
            <person name="Palazzolo M.J."/>
        </authorList>
    </citation>
    <scope>NUCLEOTIDE SEQUENCE [GENOMIC DNA]</scope>
    <source>
        <strain>Berkeley</strain>
    </source>
</reference>
<reference key="3">
    <citation type="journal article" date="2000" name="Science">
        <title>The genome sequence of Drosophila melanogaster.</title>
        <authorList>
            <person name="Adams M.D."/>
            <person name="Celniker S.E."/>
            <person name="Holt R.A."/>
            <person name="Evans C.A."/>
            <person name="Gocayne J.D."/>
            <person name="Amanatides P.G."/>
            <person name="Scherer S.E."/>
            <person name="Li P.W."/>
            <person name="Hoskins R.A."/>
            <person name="Galle R.F."/>
            <person name="George R.A."/>
            <person name="Lewis S.E."/>
            <person name="Richards S."/>
            <person name="Ashburner M."/>
            <person name="Henderson S.N."/>
            <person name="Sutton G.G."/>
            <person name="Wortman J.R."/>
            <person name="Yandell M.D."/>
            <person name="Zhang Q."/>
            <person name="Chen L.X."/>
            <person name="Brandon R.C."/>
            <person name="Rogers Y.-H.C."/>
            <person name="Blazej R.G."/>
            <person name="Champe M."/>
            <person name="Pfeiffer B.D."/>
            <person name="Wan K.H."/>
            <person name="Doyle C."/>
            <person name="Baxter E.G."/>
            <person name="Helt G."/>
            <person name="Nelson C.R."/>
            <person name="Miklos G.L.G."/>
            <person name="Abril J.F."/>
            <person name="Agbayani A."/>
            <person name="An H.-J."/>
            <person name="Andrews-Pfannkoch C."/>
            <person name="Baldwin D."/>
            <person name="Ballew R.M."/>
            <person name="Basu A."/>
            <person name="Baxendale J."/>
            <person name="Bayraktaroglu L."/>
            <person name="Beasley E.M."/>
            <person name="Beeson K.Y."/>
            <person name="Benos P.V."/>
            <person name="Berman B.P."/>
            <person name="Bhandari D."/>
            <person name="Bolshakov S."/>
            <person name="Borkova D."/>
            <person name="Botchan M.R."/>
            <person name="Bouck J."/>
            <person name="Brokstein P."/>
            <person name="Brottier P."/>
            <person name="Burtis K.C."/>
            <person name="Busam D.A."/>
            <person name="Butler H."/>
            <person name="Cadieu E."/>
            <person name="Center A."/>
            <person name="Chandra I."/>
            <person name="Cherry J.M."/>
            <person name="Cawley S."/>
            <person name="Dahlke C."/>
            <person name="Davenport L.B."/>
            <person name="Davies P."/>
            <person name="de Pablos B."/>
            <person name="Delcher A."/>
            <person name="Deng Z."/>
            <person name="Mays A.D."/>
            <person name="Dew I."/>
            <person name="Dietz S.M."/>
            <person name="Dodson K."/>
            <person name="Doup L.E."/>
            <person name="Downes M."/>
            <person name="Dugan-Rocha S."/>
            <person name="Dunkov B.C."/>
            <person name="Dunn P."/>
            <person name="Durbin K.J."/>
            <person name="Evangelista C.C."/>
            <person name="Ferraz C."/>
            <person name="Ferriera S."/>
            <person name="Fleischmann W."/>
            <person name="Fosler C."/>
            <person name="Gabrielian A.E."/>
            <person name="Garg N.S."/>
            <person name="Gelbart W.M."/>
            <person name="Glasser K."/>
            <person name="Glodek A."/>
            <person name="Gong F."/>
            <person name="Gorrell J.H."/>
            <person name="Gu Z."/>
            <person name="Guan P."/>
            <person name="Harris M."/>
            <person name="Harris N.L."/>
            <person name="Harvey D.A."/>
            <person name="Heiman T.J."/>
            <person name="Hernandez J.R."/>
            <person name="Houck J."/>
            <person name="Hostin D."/>
            <person name="Houston K.A."/>
            <person name="Howland T.J."/>
            <person name="Wei M.-H."/>
            <person name="Ibegwam C."/>
            <person name="Jalali M."/>
            <person name="Kalush F."/>
            <person name="Karpen G.H."/>
            <person name="Ke Z."/>
            <person name="Kennison J.A."/>
            <person name="Ketchum K.A."/>
            <person name="Kimmel B.E."/>
            <person name="Kodira C.D."/>
            <person name="Kraft C.L."/>
            <person name="Kravitz S."/>
            <person name="Kulp D."/>
            <person name="Lai Z."/>
            <person name="Lasko P."/>
            <person name="Lei Y."/>
            <person name="Levitsky A.A."/>
            <person name="Li J.H."/>
            <person name="Li Z."/>
            <person name="Liang Y."/>
            <person name="Lin X."/>
            <person name="Liu X."/>
            <person name="Mattei B."/>
            <person name="McIntosh T.C."/>
            <person name="McLeod M.P."/>
            <person name="McPherson D."/>
            <person name="Merkulov G."/>
            <person name="Milshina N.V."/>
            <person name="Mobarry C."/>
            <person name="Morris J."/>
            <person name="Moshrefi A."/>
            <person name="Mount S.M."/>
            <person name="Moy M."/>
            <person name="Murphy B."/>
            <person name="Murphy L."/>
            <person name="Muzny D.M."/>
            <person name="Nelson D.L."/>
            <person name="Nelson D.R."/>
            <person name="Nelson K.A."/>
            <person name="Nixon K."/>
            <person name="Nusskern D.R."/>
            <person name="Pacleb J.M."/>
            <person name="Palazzolo M."/>
            <person name="Pittman G.S."/>
            <person name="Pan S."/>
            <person name="Pollard J."/>
            <person name="Puri V."/>
            <person name="Reese M.G."/>
            <person name="Reinert K."/>
            <person name="Remington K."/>
            <person name="Saunders R.D.C."/>
            <person name="Scheeler F."/>
            <person name="Shen H."/>
            <person name="Shue B.C."/>
            <person name="Siden-Kiamos I."/>
            <person name="Simpson M."/>
            <person name="Skupski M.P."/>
            <person name="Smith T.J."/>
            <person name="Spier E."/>
            <person name="Spradling A.C."/>
            <person name="Stapleton M."/>
            <person name="Strong R."/>
            <person name="Sun E."/>
            <person name="Svirskas R."/>
            <person name="Tector C."/>
            <person name="Turner R."/>
            <person name="Venter E."/>
            <person name="Wang A.H."/>
            <person name="Wang X."/>
            <person name="Wang Z.-Y."/>
            <person name="Wassarman D.A."/>
            <person name="Weinstock G.M."/>
            <person name="Weissenbach J."/>
            <person name="Williams S.M."/>
            <person name="Woodage T."/>
            <person name="Worley K.C."/>
            <person name="Wu D."/>
            <person name="Yang S."/>
            <person name="Yao Q.A."/>
            <person name="Ye J."/>
            <person name="Yeh R.-F."/>
            <person name="Zaveri J.S."/>
            <person name="Zhan M."/>
            <person name="Zhang G."/>
            <person name="Zhao Q."/>
            <person name="Zheng L."/>
            <person name="Zheng X.H."/>
            <person name="Zhong F.N."/>
            <person name="Zhong W."/>
            <person name="Zhou X."/>
            <person name="Zhu S.C."/>
            <person name="Zhu X."/>
            <person name="Smith H.O."/>
            <person name="Gibbs R.A."/>
            <person name="Myers E.W."/>
            <person name="Rubin G.M."/>
            <person name="Venter J.C."/>
        </authorList>
    </citation>
    <scope>NUCLEOTIDE SEQUENCE [LARGE SCALE GENOMIC DNA]</scope>
    <source>
        <strain>Berkeley</strain>
    </source>
</reference>
<reference key="4">
    <citation type="journal article" date="2002" name="Genome Biol.">
        <title>Annotation of the Drosophila melanogaster euchromatic genome: a systematic review.</title>
        <authorList>
            <person name="Misra S."/>
            <person name="Crosby M.A."/>
            <person name="Mungall C.J."/>
            <person name="Matthews B.B."/>
            <person name="Campbell K.S."/>
            <person name="Hradecky P."/>
            <person name="Huang Y."/>
            <person name="Kaminker J.S."/>
            <person name="Millburn G.H."/>
            <person name="Prochnik S.E."/>
            <person name="Smith C.D."/>
            <person name="Tupy J.L."/>
            <person name="Whitfield E.J."/>
            <person name="Bayraktaroglu L."/>
            <person name="Berman B.P."/>
            <person name="Bettencourt B.R."/>
            <person name="Celniker S.E."/>
            <person name="de Grey A.D.N.J."/>
            <person name="Drysdale R.A."/>
            <person name="Harris N.L."/>
            <person name="Richter J."/>
            <person name="Russo S."/>
            <person name="Schroeder A.J."/>
            <person name="Shu S.Q."/>
            <person name="Stapleton M."/>
            <person name="Yamada C."/>
            <person name="Ashburner M."/>
            <person name="Gelbart W.M."/>
            <person name="Rubin G.M."/>
            <person name="Lewis S.E."/>
        </authorList>
    </citation>
    <scope>GENOME REANNOTATION</scope>
    <source>
        <strain>Berkeley</strain>
    </source>
</reference>
<reference key="5">
    <citation type="submission" date="2006-10" db="EMBL/GenBank/DDBJ databases">
        <authorList>
            <person name="Stapleton M."/>
            <person name="Carlson J.W."/>
            <person name="Frise E."/>
            <person name="Kapadia B."/>
            <person name="Park S."/>
            <person name="Wan K.H."/>
            <person name="Yu C."/>
            <person name="Celniker S.E."/>
        </authorList>
    </citation>
    <scope>NUCLEOTIDE SEQUENCE [LARGE SCALE MRNA]</scope>
    <source>
        <strain>Berkeley</strain>
        <tissue>Larva</tissue>
        <tissue>Pupae</tissue>
    </source>
</reference>
<feature type="chain" id="PRO_0000049112" description="Protein zerknuellt 1">
    <location>
        <begin position="1"/>
        <end position="353"/>
    </location>
</feature>
<feature type="DNA-binding region" description="Homeobox" evidence="1">
    <location>
        <begin position="90"/>
        <end position="149"/>
    </location>
</feature>
<feature type="region of interest" description="Disordered" evidence="2">
    <location>
        <begin position="48"/>
        <end position="92"/>
    </location>
</feature>
<feature type="region of interest" description="Disordered" evidence="2">
    <location>
        <begin position="148"/>
        <end position="170"/>
    </location>
</feature>
<feature type="region of interest" description="Disordered" evidence="2">
    <location>
        <begin position="202"/>
        <end position="223"/>
    </location>
</feature>
<feature type="region of interest" description="Disordered" evidence="2">
    <location>
        <begin position="242"/>
        <end position="267"/>
    </location>
</feature>
<feature type="compositionally biased region" description="Polar residues" evidence="2">
    <location>
        <begin position="48"/>
        <end position="83"/>
    </location>
</feature>
<feature type="compositionally biased region" description="Basic and acidic residues" evidence="2">
    <location>
        <begin position="148"/>
        <end position="157"/>
    </location>
</feature>
<feature type="compositionally biased region" description="Polar residues" evidence="2">
    <location>
        <begin position="210"/>
        <end position="223"/>
    </location>
</feature>
<feature type="compositionally biased region" description="Low complexity" evidence="2">
    <location>
        <begin position="248"/>
        <end position="267"/>
    </location>
</feature>
<feature type="helix" evidence="4">
    <location>
        <begin position="134"/>
        <end position="142"/>
    </location>
</feature>
<feature type="turn" evidence="4">
    <location>
        <begin position="143"/>
        <end position="146"/>
    </location>
</feature>
<evidence type="ECO:0000255" key="1">
    <source>
        <dbReference type="PROSITE-ProRule" id="PRU00108"/>
    </source>
</evidence>
<evidence type="ECO:0000256" key="2">
    <source>
        <dbReference type="SAM" id="MobiDB-lite"/>
    </source>
</evidence>
<evidence type="ECO:0000269" key="3">
    <source>
    </source>
</evidence>
<evidence type="ECO:0007829" key="4">
    <source>
        <dbReference type="PDB" id="1KZ2"/>
    </source>
</evidence>
<gene>
    <name type="primary">zen</name>
    <name type="synonym">z1</name>
    <name type="synonym">zen1</name>
    <name type="ORF">CG1046</name>
</gene>
<comment type="function">
    <text evidence="3">Required for the differentiation of the dorsal-ventral pattern, and does not appear to be involved in the process of segmentation.</text>
</comment>
<comment type="subcellular location">
    <subcellularLocation>
        <location evidence="1 3">Nucleus</location>
    </subcellularLocation>
</comment>
<protein>
    <recommendedName>
        <fullName>Protein zerknuellt 1</fullName>
        <shortName>ZEN-1</shortName>
    </recommendedName>
</protein>
<name>ZEN1_DROME</name>
<sequence>MSSVMHYYPVHQAKVGSYSADPSEVKYSDLIYGHHHDVNPIGLPPNYNQMNSNPTTLNDHCSPQHVHQQHVSSDENLPSQPNHDSQRVKLKRSRTAFTSVQLVELENEFKSNMYLYRTRRIEIAQRLSLCERQVKIWFQNRRMKFKKDIQGHREPKSNAKLAQPQAEQSAHRGIVKRLMSYSQDPREGTAAAEKRPMMAVAPVNPKPDYQASQKMKTEASTNNGMCSSADLSEILEHLAQTTAAPQVSTATSSTGTSTNSASSSSSGHYSYNVDLVLQSIKQDLEAAAQAWSKSKSAPILATQSWHPSSQSQVPTSVHAAPSMNLSWGEPAAKSRKLSVNHMNPCVTSYNYPN</sequence>